<keyword id="KW-0997">Cell inner membrane</keyword>
<keyword id="KW-1003">Cell membrane</keyword>
<keyword id="KW-0472">Membrane</keyword>
<keyword id="KW-1185">Reference proteome</keyword>
<keyword id="KW-0812">Transmembrane</keyword>
<keyword id="KW-1133">Transmembrane helix</keyword>
<proteinExistence type="inferred from homology"/>
<dbReference type="EMBL" id="CU928161">
    <property type="protein sequence ID" value="CAR02650.2"/>
    <property type="molecule type" value="Genomic_DNA"/>
</dbReference>
<dbReference type="RefSeq" id="WP_000028546.1">
    <property type="nucleotide sequence ID" value="NC_011742.1"/>
</dbReference>
<dbReference type="KEGG" id="ecz:ECS88_1325"/>
<dbReference type="HOGENOM" id="CLU_073287_0_0_6"/>
<dbReference type="Proteomes" id="UP000000747">
    <property type="component" value="Chromosome"/>
</dbReference>
<dbReference type="GO" id="GO:0005886">
    <property type="term" value="C:plasma membrane"/>
    <property type="evidence" value="ECO:0007669"/>
    <property type="project" value="UniProtKB-SubCell"/>
</dbReference>
<dbReference type="HAMAP" id="MF_01067">
    <property type="entry name" value="UPF0259"/>
    <property type="match status" value="1"/>
</dbReference>
<dbReference type="InterPro" id="IPR009627">
    <property type="entry name" value="UPF0259"/>
</dbReference>
<dbReference type="NCBIfam" id="NF002774">
    <property type="entry name" value="PRK02868.1"/>
    <property type="match status" value="1"/>
</dbReference>
<dbReference type="Pfam" id="PF06790">
    <property type="entry name" value="UPF0259"/>
    <property type="match status" value="1"/>
</dbReference>
<reference key="1">
    <citation type="journal article" date="2009" name="PLoS Genet.">
        <title>Organised genome dynamics in the Escherichia coli species results in highly diverse adaptive paths.</title>
        <authorList>
            <person name="Touchon M."/>
            <person name="Hoede C."/>
            <person name="Tenaillon O."/>
            <person name="Barbe V."/>
            <person name="Baeriswyl S."/>
            <person name="Bidet P."/>
            <person name="Bingen E."/>
            <person name="Bonacorsi S."/>
            <person name="Bouchier C."/>
            <person name="Bouvet O."/>
            <person name="Calteau A."/>
            <person name="Chiapello H."/>
            <person name="Clermont O."/>
            <person name="Cruveiller S."/>
            <person name="Danchin A."/>
            <person name="Diard M."/>
            <person name="Dossat C."/>
            <person name="Karoui M.E."/>
            <person name="Frapy E."/>
            <person name="Garry L."/>
            <person name="Ghigo J.M."/>
            <person name="Gilles A.M."/>
            <person name="Johnson J."/>
            <person name="Le Bouguenec C."/>
            <person name="Lescat M."/>
            <person name="Mangenot S."/>
            <person name="Martinez-Jehanne V."/>
            <person name="Matic I."/>
            <person name="Nassif X."/>
            <person name="Oztas S."/>
            <person name="Petit M.A."/>
            <person name="Pichon C."/>
            <person name="Rouy Z."/>
            <person name="Ruf C.S."/>
            <person name="Schneider D."/>
            <person name="Tourret J."/>
            <person name="Vacherie B."/>
            <person name="Vallenet D."/>
            <person name="Medigue C."/>
            <person name="Rocha E.P.C."/>
            <person name="Denamur E."/>
        </authorList>
    </citation>
    <scope>NUCLEOTIDE SEQUENCE [LARGE SCALE GENOMIC DNA]</scope>
    <source>
        <strain>S88 / ExPEC</strain>
    </source>
</reference>
<feature type="chain" id="PRO_1000136579" description="UPF0259 membrane protein YciC">
    <location>
        <begin position="1"/>
        <end position="247"/>
    </location>
</feature>
<feature type="transmembrane region" description="Helical" evidence="1">
    <location>
        <begin position="20"/>
        <end position="40"/>
    </location>
</feature>
<feature type="transmembrane region" description="Helical" evidence="1">
    <location>
        <begin position="87"/>
        <end position="107"/>
    </location>
</feature>
<feature type="transmembrane region" description="Helical" evidence="1">
    <location>
        <begin position="118"/>
        <end position="140"/>
    </location>
</feature>
<feature type="transmembrane region" description="Helical" evidence="1">
    <location>
        <begin position="152"/>
        <end position="172"/>
    </location>
</feature>
<feature type="transmembrane region" description="Helical" evidence="1">
    <location>
        <begin position="187"/>
        <end position="209"/>
    </location>
</feature>
<feature type="transmembrane region" description="Helical" evidence="1">
    <location>
        <begin position="225"/>
        <end position="245"/>
    </location>
</feature>
<sequence length="247" mass="26405">MSITAQSVYRDTGNFFRNQFMTILLVSLLCAFITVVLGHVFSPSDAQLAQLNDGVPVSGSSGLFDLVQNMSPEQQQILLQASAASTFSGLIGNAILAGGVILIIQLVSAGQRVSALRAIGASAPILPKLFILIFLTTLLVQIGIMLVVVPGIIMAILLALAPVMLVQDKMGVFASMRSSMRLTWANMRLVAPAVLSWLLAKTLLLLFASSFAALTPEIGAVLANTLSNLISAVLLIYLFRLYMLIRQ</sequence>
<name>YCIC_ECO45</name>
<protein>
    <recommendedName>
        <fullName evidence="1">UPF0259 membrane protein YciC</fullName>
    </recommendedName>
</protein>
<accession>B7ML08</accession>
<gene>
    <name evidence="1" type="primary">yciC</name>
    <name type="ordered locus">ECS88_1325</name>
</gene>
<organism>
    <name type="scientific">Escherichia coli O45:K1 (strain S88 / ExPEC)</name>
    <dbReference type="NCBI Taxonomy" id="585035"/>
    <lineage>
        <taxon>Bacteria</taxon>
        <taxon>Pseudomonadati</taxon>
        <taxon>Pseudomonadota</taxon>
        <taxon>Gammaproteobacteria</taxon>
        <taxon>Enterobacterales</taxon>
        <taxon>Enterobacteriaceae</taxon>
        <taxon>Escherichia</taxon>
    </lineage>
</organism>
<evidence type="ECO:0000255" key="1">
    <source>
        <dbReference type="HAMAP-Rule" id="MF_01067"/>
    </source>
</evidence>
<comment type="subcellular location">
    <subcellularLocation>
        <location evidence="1">Cell inner membrane</location>
        <topology evidence="1">Multi-pass membrane protein</topology>
    </subcellularLocation>
</comment>
<comment type="similarity">
    <text evidence="1">Belongs to the UPF0259 family.</text>
</comment>